<keyword id="KW-1003">Cell membrane</keyword>
<keyword id="KW-1015">Disulfide bond</keyword>
<keyword id="KW-0325">Glycoprotein</keyword>
<keyword id="KW-0393">Immunoglobulin domain</keyword>
<keyword id="KW-0472">Membrane</keyword>
<keyword id="KW-0597">Phosphoprotein</keyword>
<keyword id="KW-0675">Receptor</keyword>
<keyword id="KW-1185">Reference proteome</keyword>
<keyword id="KW-0732">Signal</keyword>
<keyword id="KW-0812">Transmembrane</keyword>
<keyword id="KW-1133">Transmembrane helix</keyword>
<proteinExistence type="evidence at transcript level"/>
<protein>
    <recommendedName>
        <fullName>T-cell-specific surface glycoprotein CD28</fullName>
    </recommendedName>
    <cdAntigenName>CD28</cdAntigenName>
</protein>
<comment type="function">
    <text evidence="2">Receptor that plays a role in T-cell activation, proliferation, survival and the maintenance of immune homeostasis. Functions not only as an amplifier of TCR signals but delivers unique signals that control intracellular biochemical events that alter the gene expression program of T-cells. Stimulation upon engagement of its cognate ligands CD80 or CD86 increases proliferation and expression of various cytokines in particular IL2 production in both CD4(+) and CD8(+) T-cell subsets. Mechanistically, ligation induces recruitment of protein kinase C-theta/PRKCQ and GRB2 leading to NF-kappa-B activation via both PI3K/Akt-dependent and -independent pathways. In conjunction with TCR/CD3 ligation and CD40L costimulation, enhances the production of IL4 and IL10 in T-cells.</text>
</comment>
<comment type="subunit">
    <text evidence="2">Homodimer; disulfide-linked. Interacts with DUSP14. Binds to CD80/B7-1 and CD86/B7-2/B70. Interacts with GRB2. Interacts with PIK3R1. Interacts with PRKCQ.</text>
</comment>
<comment type="subcellular location">
    <subcellularLocation>
        <location evidence="2">Cell membrane</location>
        <topology evidence="2">Single-pass type I membrane protein</topology>
    </subcellularLocation>
</comment>
<comment type="PTM">
    <text evidence="2">Phosphorylated by LCK. Dephosphorylated by PTPN11.</text>
</comment>
<feature type="signal peptide" evidence="1">
    <location>
        <begin position="1"/>
        <end position="19"/>
    </location>
</feature>
<feature type="chain" id="PRO_0000014655" description="T-cell-specific surface glycoprotein CD28">
    <location>
        <begin position="20"/>
        <end position="221"/>
    </location>
</feature>
<feature type="topological domain" description="Extracellular" evidence="3">
    <location>
        <begin position="20"/>
        <end position="150"/>
    </location>
</feature>
<feature type="transmembrane region" description="Helical" evidence="3">
    <location>
        <begin position="151"/>
        <end position="177"/>
    </location>
</feature>
<feature type="topological domain" description="Cytoplasmic" evidence="3">
    <location>
        <begin position="178"/>
        <end position="221"/>
    </location>
</feature>
<feature type="domain" description="Ig-like V-type">
    <location>
        <begin position="29"/>
        <end position="138"/>
    </location>
</feature>
<feature type="modified residue" description="Phosphoserine" evidence="2">
    <location>
        <position position="190"/>
    </location>
</feature>
<feature type="modified residue" description="Phosphotyrosine" evidence="2">
    <location>
        <position position="192"/>
    </location>
</feature>
<feature type="modified residue" description="Phosphotyrosine" evidence="2">
    <location>
        <position position="210"/>
    </location>
</feature>
<feature type="glycosylation site" description="N-linked (GlcNAc...) asparagine" evidence="3">
    <location>
        <position position="38"/>
    </location>
</feature>
<feature type="glycosylation site" description="N-linked (GlcNAc...) asparagine" evidence="3">
    <location>
        <position position="72"/>
    </location>
</feature>
<feature type="glycosylation site" description="N-linked (GlcNAc...) asparagine" evidence="3">
    <location>
        <position position="93"/>
    </location>
</feature>
<feature type="glycosylation site" description="N-linked (GlcNAc...) asparagine" evidence="3">
    <location>
        <position position="106"/>
    </location>
</feature>
<feature type="glycosylation site" description="N-linked (GlcNAc...) asparagine" evidence="3">
    <location>
        <position position="130"/>
    </location>
</feature>
<feature type="disulfide bond" evidence="1">
    <location>
        <begin position="41"/>
        <end position="113"/>
    </location>
</feature>
<feature type="disulfide bond" evidence="1">
    <location>
        <begin position="67"/>
        <end position="87"/>
    </location>
</feature>
<organism>
    <name type="scientific">Oryctolagus cuniculus</name>
    <name type="common">Rabbit</name>
    <dbReference type="NCBI Taxonomy" id="9986"/>
    <lineage>
        <taxon>Eukaryota</taxon>
        <taxon>Metazoa</taxon>
        <taxon>Chordata</taxon>
        <taxon>Craniata</taxon>
        <taxon>Vertebrata</taxon>
        <taxon>Euteleostomi</taxon>
        <taxon>Mammalia</taxon>
        <taxon>Eutheria</taxon>
        <taxon>Euarchontoglires</taxon>
        <taxon>Glires</taxon>
        <taxon>Lagomorpha</taxon>
        <taxon>Leporidae</taxon>
        <taxon>Oryctolagus</taxon>
    </lineage>
</organism>
<dbReference type="EMBL" id="D49841">
    <property type="protein sequence ID" value="BAA08641.1"/>
    <property type="molecule type" value="mRNA"/>
</dbReference>
<dbReference type="PIR" id="I46689">
    <property type="entry name" value="I46689"/>
</dbReference>
<dbReference type="RefSeq" id="NP_001075676.1">
    <property type="nucleotide sequence ID" value="NM_001082207.1"/>
</dbReference>
<dbReference type="SMR" id="P42069"/>
<dbReference type="FunCoup" id="P42069">
    <property type="interactions" value="69"/>
</dbReference>
<dbReference type="STRING" id="9986.ENSOCUP00000025050"/>
<dbReference type="GlyCosmos" id="P42069">
    <property type="glycosylation" value="5 sites, No reported glycans"/>
</dbReference>
<dbReference type="PaxDb" id="9986-ENSOCUP00000025050"/>
<dbReference type="GeneID" id="100008998"/>
<dbReference type="KEGG" id="ocu:100008998"/>
<dbReference type="CTD" id="940"/>
<dbReference type="eggNOG" id="ENOG502SAVP">
    <property type="taxonomic scope" value="Eukaryota"/>
</dbReference>
<dbReference type="InParanoid" id="P42069"/>
<dbReference type="OrthoDB" id="8654606at2759"/>
<dbReference type="Proteomes" id="UP000001811">
    <property type="component" value="Unplaced"/>
</dbReference>
<dbReference type="GO" id="GO:0009897">
    <property type="term" value="C:external side of plasma membrane"/>
    <property type="evidence" value="ECO:0007669"/>
    <property type="project" value="TreeGrafter"/>
</dbReference>
<dbReference type="GO" id="GO:0006955">
    <property type="term" value="P:immune response"/>
    <property type="evidence" value="ECO:0007669"/>
    <property type="project" value="InterPro"/>
</dbReference>
<dbReference type="GO" id="GO:0032733">
    <property type="term" value="P:positive regulation of interleukin-10 production"/>
    <property type="evidence" value="ECO:0000250"/>
    <property type="project" value="UniProtKB"/>
</dbReference>
<dbReference type="GO" id="GO:0032743">
    <property type="term" value="P:positive regulation of interleukin-2 production"/>
    <property type="evidence" value="ECO:0000250"/>
    <property type="project" value="UniProtKB"/>
</dbReference>
<dbReference type="GO" id="GO:0032753">
    <property type="term" value="P:positive regulation of interleukin-4 production"/>
    <property type="evidence" value="ECO:0000250"/>
    <property type="project" value="UniProtKB"/>
</dbReference>
<dbReference type="GO" id="GO:0045840">
    <property type="term" value="P:positive regulation of mitotic nuclear division"/>
    <property type="evidence" value="ECO:0000250"/>
    <property type="project" value="UniProtKB"/>
</dbReference>
<dbReference type="GO" id="GO:0042102">
    <property type="term" value="P:positive regulation of T cell proliferation"/>
    <property type="evidence" value="ECO:0000250"/>
    <property type="project" value="UniProtKB"/>
</dbReference>
<dbReference type="GO" id="GO:0042110">
    <property type="term" value="P:T cell activation"/>
    <property type="evidence" value="ECO:0007669"/>
    <property type="project" value="TreeGrafter"/>
</dbReference>
<dbReference type="GO" id="GO:0031295">
    <property type="term" value="P:T cell costimulation"/>
    <property type="evidence" value="ECO:0007669"/>
    <property type="project" value="TreeGrafter"/>
</dbReference>
<dbReference type="GO" id="GO:0050852">
    <property type="term" value="P:T cell receptor signaling pathway"/>
    <property type="evidence" value="ECO:0007669"/>
    <property type="project" value="TreeGrafter"/>
</dbReference>
<dbReference type="FunFam" id="2.60.40.10:FF:000716">
    <property type="entry name" value="T-cell-specific surface glycoprotein CD28"/>
    <property type="match status" value="1"/>
</dbReference>
<dbReference type="Gene3D" id="2.60.40.10">
    <property type="entry name" value="Immunoglobulins"/>
    <property type="match status" value="1"/>
</dbReference>
<dbReference type="InterPro" id="IPR008093">
    <property type="entry name" value="CD28"/>
</dbReference>
<dbReference type="InterPro" id="IPR040216">
    <property type="entry name" value="CTLA4/CD28"/>
</dbReference>
<dbReference type="InterPro" id="IPR036179">
    <property type="entry name" value="Ig-like_dom_sf"/>
</dbReference>
<dbReference type="InterPro" id="IPR013783">
    <property type="entry name" value="Ig-like_fold"/>
</dbReference>
<dbReference type="InterPro" id="IPR013106">
    <property type="entry name" value="Ig_V-set"/>
</dbReference>
<dbReference type="PANTHER" id="PTHR11494">
    <property type="entry name" value="CYTOTOXIC T-LYMPHOCYTE PROTEIN"/>
    <property type="match status" value="1"/>
</dbReference>
<dbReference type="PANTHER" id="PTHR11494:SF7">
    <property type="entry name" value="T-CELL-SPECIFIC SURFACE GLYCOPROTEIN CD28"/>
    <property type="match status" value="1"/>
</dbReference>
<dbReference type="Pfam" id="PF15910">
    <property type="entry name" value="V-set_2"/>
    <property type="match status" value="1"/>
</dbReference>
<dbReference type="PRINTS" id="PR01717">
    <property type="entry name" value="CD28ANTIGEN"/>
</dbReference>
<dbReference type="SMART" id="SM00406">
    <property type="entry name" value="IGv"/>
    <property type="match status" value="1"/>
</dbReference>
<dbReference type="SUPFAM" id="SSF48726">
    <property type="entry name" value="Immunoglobulin"/>
    <property type="match status" value="1"/>
</dbReference>
<gene>
    <name type="primary">CD28</name>
</gene>
<reference key="1">
    <citation type="journal article" date="1995" name="Immunogenetics">
        <title>Cloning and sequencing of the rabbit gene encoding T-cell costimulatory molecules.</title>
        <authorList>
            <person name="Isono T."/>
            <person name="Seto A."/>
        </authorList>
    </citation>
    <scope>NUCLEOTIDE SEQUENCE [MRNA]</scope>
    <source>
        <strain>B/J X Chbb:HM</strain>
    </source>
</reference>
<evidence type="ECO:0000250" key="1"/>
<evidence type="ECO:0000250" key="2">
    <source>
        <dbReference type="UniProtKB" id="P10747"/>
    </source>
</evidence>
<evidence type="ECO:0000255" key="3"/>
<accession>P42069</accession>
<name>CD28_RABIT</name>
<sequence length="221" mass="25307">MILRLLLAFNFFPSIQGTENKILVKQSPMLVVNNNEVNLSCKYTYNLFSKEFRASLYKGADSAVEVCVVNGNFSHPHQFHSTTGFNCDGKLGNETVTFYLKNLYVNQTDIYFCKIEVMYPPPYLDNEKSNGTIIHVKEQHFCPAHPSPKSSTLFWVLVVVGAVLAFYSMLVTVALFSCWMKSKKNRLLQSDYMNMTPRRPGPTRKHYQPYAPARDFAAYRS</sequence>